<sequence>MKNINPTQTAAWQALQKHFDEMKDVTIADLFAKDGDRFSKFSATFGDQMLVDYSKNRITEETLAKLQDLAKECDLAGAIKSMFSGEKINRTENRAVLHVALRNRSNTPILVDGKDVMPEVNAVLEKMKTFSEAIISGEWKGYTGKAITDVVNIGIGGSDLGPYMVTEALRPYKNHLNMHFVSNVDGTHIAEVLKKVNPETTLFLVASKTFTTQETMTNAHSARDWFLKAAGDEKHVAKHFAALSTNAKAVGEFGIDTANMFEFWDWVGGRYSLWSAIGLSIVLSIGFDNFVELLSGAHAMDKHFSTTPAEKNLPVLLALIGIWYNNFFGAETEAILPYDQYMHRFAAYFQQGNMESNGKYVDRNGNVVDYQTGPIIWGEPGTNGQHAFYQLIHQGTKMVPCDFIAPAITHNPLSDHHQKLLSNFFAQTEALAFGKSREVVEQEYRDQGKDPATLDYVVPFKVFEGNRPTNSILLREITPFSLGALIALYEHKIFTQGVILNIFTFDQWGVELGKQLANRILPELKDDKEISSHDSSTNGLINRYKAWRG</sequence>
<gene>
    <name evidence="1" type="primary">pgi</name>
    <name type="ordered locus">EcE24377A_4573</name>
</gene>
<keyword id="KW-0007">Acetylation</keyword>
<keyword id="KW-0963">Cytoplasm</keyword>
<keyword id="KW-0312">Gluconeogenesis</keyword>
<keyword id="KW-0324">Glycolysis</keyword>
<keyword id="KW-0413">Isomerase</keyword>
<keyword id="KW-1185">Reference proteome</keyword>
<accession>A7ZUP3</accession>
<feature type="chain" id="PRO_1000060393" description="Glucose-6-phosphate isomerase">
    <location>
        <begin position="1"/>
        <end position="549"/>
    </location>
</feature>
<feature type="active site" description="Proton donor" evidence="1">
    <location>
        <position position="355"/>
    </location>
</feature>
<feature type="active site" evidence="1">
    <location>
        <position position="386"/>
    </location>
</feature>
<feature type="active site" evidence="1">
    <location>
        <position position="514"/>
    </location>
</feature>
<feature type="modified residue" description="N6-acetyllysine" evidence="1">
    <location>
        <position position="80"/>
    </location>
</feature>
<feature type="modified residue" description="N6-acetyllysine" evidence="1">
    <location>
        <position position="228"/>
    </location>
</feature>
<feature type="modified residue" description="N6-acetyllysine" evidence="1">
    <location>
        <position position="234"/>
    </location>
</feature>
<dbReference type="EC" id="5.3.1.9" evidence="1"/>
<dbReference type="EMBL" id="CP000800">
    <property type="protein sequence ID" value="ABV16980.1"/>
    <property type="molecule type" value="Genomic_DNA"/>
</dbReference>
<dbReference type="RefSeq" id="WP_000790009.1">
    <property type="nucleotide sequence ID" value="NC_009801.1"/>
</dbReference>
<dbReference type="SMR" id="A7ZUP3"/>
<dbReference type="GeneID" id="75204168"/>
<dbReference type="KEGG" id="ecw:EcE24377A_4573"/>
<dbReference type="HOGENOM" id="CLU_017947_3_1_6"/>
<dbReference type="UniPathway" id="UPA00109">
    <property type="reaction ID" value="UER00181"/>
</dbReference>
<dbReference type="UniPathway" id="UPA00138"/>
<dbReference type="Proteomes" id="UP000001122">
    <property type="component" value="Chromosome"/>
</dbReference>
<dbReference type="GO" id="GO:0005829">
    <property type="term" value="C:cytosol"/>
    <property type="evidence" value="ECO:0007669"/>
    <property type="project" value="TreeGrafter"/>
</dbReference>
<dbReference type="GO" id="GO:0097367">
    <property type="term" value="F:carbohydrate derivative binding"/>
    <property type="evidence" value="ECO:0007669"/>
    <property type="project" value="InterPro"/>
</dbReference>
<dbReference type="GO" id="GO:0004347">
    <property type="term" value="F:glucose-6-phosphate isomerase activity"/>
    <property type="evidence" value="ECO:0007669"/>
    <property type="project" value="UniProtKB-UniRule"/>
</dbReference>
<dbReference type="GO" id="GO:0048029">
    <property type="term" value="F:monosaccharide binding"/>
    <property type="evidence" value="ECO:0007669"/>
    <property type="project" value="TreeGrafter"/>
</dbReference>
<dbReference type="GO" id="GO:0006094">
    <property type="term" value="P:gluconeogenesis"/>
    <property type="evidence" value="ECO:0007669"/>
    <property type="project" value="UniProtKB-UniRule"/>
</dbReference>
<dbReference type="GO" id="GO:0051156">
    <property type="term" value="P:glucose 6-phosphate metabolic process"/>
    <property type="evidence" value="ECO:0007669"/>
    <property type="project" value="TreeGrafter"/>
</dbReference>
<dbReference type="GO" id="GO:0006096">
    <property type="term" value="P:glycolytic process"/>
    <property type="evidence" value="ECO:0007669"/>
    <property type="project" value="UniProtKB-UniRule"/>
</dbReference>
<dbReference type="CDD" id="cd05015">
    <property type="entry name" value="SIS_PGI_1"/>
    <property type="match status" value="1"/>
</dbReference>
<dbReference type="CDD" id="cd05016">
    <property type="entry name" value="SIS_PGI_2"/>
    <property type="match status" value="1"/>
</dbReference>
<dbReference type="FunFam" id="1.10.1390.10:FF:000001">
    <property type="entry name" value="Glucose-6-phosphate isomerase"/>
    <property type="match status" value="1"/>
</dbReference>
<dbReference type="FunFam" id="3.40.50.10490:FF:000004">
    <property type="entry name" value="Glucose-6-phosphate isomerase"/>
    <property type="match status" value="1"/>
</dbReference>
<dbReference type="Gene3D" id="1.10.1390.10">
    <property type="match status" value="1"/>
</dbReference>
<dbReference type="Gene3D" id="3.40.50.10490">
    <property type="entry name" value="Glucose-6-phosphate isomerase like protein, domain 1"/>
    <property type="match status" value="2"/>
</dbReference>
<dbReference type="HAMAP" id="MF_00473">
    <property type="entry name" value="G6P_isomerase"/>
    <property type="match status" value="1"/>
</dbReference>
<dbReference type="InterPro" id="IPR001672">
    <property type="entry name" value="G6P_Isomerase"/>
</dbReference>
<dbReference type="InterPro" id="IPR023096">
    <property type="entry name" value="G6P_Isomerase_C"/>
</dbReference>
<dbReference type="InterPro" id="IPR018189">
    <property type="entry name" value="Phosphoglucose_isomerase_CS"/>
</dbReference>
<dbReference type="InterPro" id="IPR046348">
    <property type="entry name" value="SIS_dom_sf"/>
</dbReference>
<dbReference type="InterPro" id="IPR035476">
    <property type="entry name" value="SIS_PGI_1"/>
</dbReference>
<dbReference type="InterPro" id="IPR035482">
    <property type="entry name" value="SIS_PGI_2"/>
</dbReference>
<dbReference type="NCBIfam" id="NF001211">
    <property type="entry name" value="PRK00179.1"/>
    <property type="match status" value="1"/>
</dbReference>
<dbReference type="PANTHER" id="PTHR11469">
    <property type="entry name" value="GLUCOSE-6-PHOSPHATE ISOMERASE"/>
    <property type="match status" value="1"/>
</dbReference>
<dbReference type="PANTHER" id="PTHR11469:SF1">
    <property type="entry name" value="GLUCOSE-6-PHOSPHATE ISOMERASE"/>
    <property type="match status" value="1"/>
</dbReference>
<dbReference type="Pfam" id="PF00342">
    <property type="entry name" value="PGI"/>
    <property type="match status" value="1"/>
</dbReference>
<dbReference type="PRINTS" id="PR00662">
    <property type="entry name" value="G6PISOMERASE"/>
</dbReference>
<dbReference type="SUPFAM" id="SSF53697">
    <property type="entry name" value="SIS domain"/>
    <property type="match status" value="1"/>
</dbReference>
<dbReference type="PROSITE" id="PS00765">
    <property type="entry name" value="P_GLUCOSE_ISOMERASE_1"/>
    <property type="match status" value="1"/>
</dbReference>
<dbReference type="PROSITE" id="PS00174">
    <property type="entry name" value="P_GLUCOSE_ISOMERASE_2"/>
    <property type="match status" value="1"/>
</dbReference>
<dbReference type="PROSITE" id="PS51463">
    <property type="entry name" value="P_GLUCOSE_ISOMERASE_3"/>
    <property type="match status" value="1"/>
</dbReference>
<proteinExistence type="inferred from homology"/>
<name>G6PI_ECO24</name>
<reference key="1">
    <citation type="journal article" date="2008" name="J. Bacteriol.">
        <title>The pangenome structure of Escherichia coli: comparative genomic analysis of E. coli commensal and pathogenic isolates.</title>
        <authorList>
            <person name="Rasko D.A."/>
            <person name="Rosovitz M.J."/>
            <person name="Myers G.S.A."/>
            <person name="Mongodin E.F."/>
            <person name="Fricke W.F."/>
            <person name="Gajer P."/>
            <person name="Crabtree J."/>
            <person name="Sebaihia M."/>
            <person name="Thomson N.R."/>
            <person name="Chaudhuri R."/>
            <person name="Henderson I.R."/>
            <person name="Sperandio V."/>
            <person name="Ravel J."/>
        </authorList>
    </citation>
    <scope>NUCLEOTIDE SEQUENCE [LARGE SCALE GENOMIC DNA]</scope>
    <source>
        <strain>E24377A / ETEC</strain>
    </source>
</reference>
<organism>
    <name type="scientific">Escherichia coli O139:H28 (strain E24377A / ETEC)</name>
    <dbReference type="NCBI Taxonomy" id="331111"/>
    <lineage>
        <taxon>Bacteria</taxon>
        <taxon>Pseudomonadati</taxon>
        <taxon>Pseudomonadota</taxon>
        <taxon>Gammaproteobacteria</taxon>
        <taxon>Enterobacterales</taxon>
        <taxon>Enterobacteriaceae</taxon>
        <taxon>Escherichia</taxon>
    </lineage>
</organism>
<comment type="function">
    <text evidence="1">Catalyzes the reversible isomerization of glucose-6-phosphate to fructose-6-phosphate.</text>
</comment>
<comment type="catalytic activity">
    <reaction evidence="1">
        <text>alpha-D-glucose 6-phosphate = beta-D-fructose 6-phosphate</text>
        <dbReference type="Rhea" id="RHEA:11816"/>
        <dbReference type="ChEBI" id="CHEBI:57634"/>
        <dbReference type="ChEBI" id="CHEBI:58225"/>
        <dbReference type="EC" id="5.3.1.9"/>
    </reaction>
</comment>
<comment type="pathway">
    <text evidence="1">Carbohydrate biosynthesis; gluconeogenesis.</text>
</comment>
<comment type="pathway">
    <text evidence="1">Carbohydrate degradation; glycolysis; D-glyceraldehyde 3-phosphate and glycerone phosphate from D-glucose: step 2/4.</text>
</comment>
<comment type="subcellular location">
    <subcellularLocation>
        <location evidence="1">Cytoplasm</location>
    </subcellularLocation>
</comment>
<comment type="similarity">
    <text evidence="1">Belongs to the GPI family.</text>
</comment>
<evidence type="ECO:0000255" key="1">
    <source>
        <dbReference type="HAMAP-Rule" id="MF_00473"/>
    </source>
</evidence>
<protein>
    <recommendedName>
        <fullName evidence="1">Glucose-6-phosphate isomerase</fullName>
        <shortName evidence="1">GPI</shortName>
        <ecNumber evidence="1">5.3.1.9</ecNumber>
    </recommendedName>
    <alternativeName>
        <fullName evidence="1">Phosphoglucose isomerase</fullName>
        <shortName evidence="1">PGI</shortName>
    </alternativeName>
    <alternativeName>
        <fullName evidence="1">Phosphohexose isomerase</fullName>
        <shortName evidence="1">PHI</shortName>
    </alternativeName>
</protein>